<proteinExistence type="inferred from homology"/>
<reference key="1">
    <citation type="journal article" date="2009" name="Nat. Genet.">
        <title>Comparative genomic and phylogeographic analysis of Mycobacterium leprae.</title>
        <authorList>
            <person name="Monot M."/>
            <person name="Honore N."/>
            <person name="Garnier T."/>
            <person name="Zidane N."/>
            <person name="Sherafi D."/>
            <person name="Paniz-Mondolfi A."/>
            <person name="Matsuoka M."/>
            <person name="Taylor G.M."/>
            <person name="Donoghue H.D."/>
            <person name="Bouwman A."/>
            <person name="Mays S."/>
            <person name="Watson C."/>
            <person name="Lockwood D."/>
            <person name="Khamispour A."/>
            <person name="Dowlati Y."/>
            <person name="Jianping S."/>
            <person name="Rea T.H."/>
            <person name="Vera-Cabrera L."/>
            <person name="Stefani M.M."/>
            <person name="Banu S."/>
            <person name="Macdonald M."/>
            <person name="Sapkota B.R."/>
            <person name="Spencer J.S."/>
            <person name="Thomas J."/>
            <person name="Harshman K."/>
            <person name="Singh P."/>
            <person name="Busso P."/>
            <person name="Gattiker A."/>
            <person name="Rougemont J."/>
            <person name="Brennan P.J."/>
            <person name="Cole S.T."/>
        </authorList>
    </citation>
    <scope>NUCLEOTIDE SEQUENCE [LARGE SCALE GENOMIC DNA]</scope>
    <source>
        <strain>Br4923</strain>
    </source>
</reference>
<protein>
    <recommendedName>
        <fullName evidence="1">N-acetyl-gamma-glutamyl-phosphate reductase</fullName>
        <shortName evidence="1">AGPR</shortName>
        <ecNumber evidence="1">1.2.1.38</ecNumber>
    </recommendedName>
    <alternativeName>
        <fullName evidence="1">N-acetyl-glutamate semialdehyde dehydrogenase</fullName>
        <shortName evidence="1">NAGSA dehydrogenase</shortName>
    </alternativeName>
</protein>
<feature type="chain" id="PRO_1000123248" description="N-acetyl-gamma-glutamyl-phosphate reductase">
    <location>
        <begin position="1"/>
        <end position="347"/>
    </location>
</feature>
<feature type="active site" evidence="1">
    <location>
        <position position="153"/>
    </location>
</feature>
<evidence type="ECO:0000255" key="1">
    <source>
        <dbReference type="HAMAP-Rule" id="MF_00150"/>
    </source>
</evidence>
<dbReference type="EC" id="1.2.1.38" evidence="1"/>
<dbReference type="EMBL" id="FM211192">
    <property type="protein sequence ID" value="CAR71501.1"/>
    <property type="molecule type" value="Genomic_DNA"/>
</dbReference>
<dbReference type="SMR" id="B8ZRK2"/>
<dbReference type="KEGG" id="mlb:MLBr01406"/>
<dbReference type="HOGENOM" id="CLU_006384_0_0_11"/>
<dbReference type="UniPathway" id="UPA00068">
    <property type="reaction ID" value="UER00108"/>
</dbReference>
<dbReference type="Proteomes" id="UP000006900">
    <property type="component" value="Chromosome"/>
</dbReference>
<dbReference type="GO" id="GO:0005737">
    <property type="term" value="C:cytoplasm"/>
    <property type="evidence" value="ECO:0007669"/>
    <property type="project" value="UniProtKB-SubCell"/>
</dbReference>
<dbReference type="GO" id="GO:0003942">
    <property type="term" value="F:N-acetyl-gamma-glutamyl-phosphate reductase activity"/>
    <property type="evidence" value="ECO:0007669"/>
    <property type="project" value="UniProtKB-UniRule"/>
</dbReference>
<dbReference type="GO" id="GO:0051287">
    <property type="term" value="F:NAD binding"/>
    <property type="evidence" value="ECO:0007669"/>
    <property type="project" value="InterPro"/>
</dbReference>
<dbReference type="GO" id="GO:0070401">
    <property type="term" value="F:NADP+ binding"/>
    <property type="evidence" value="ECO:0007669"/>
    <property type="project" value="InterPro"/>
</dbReference>
<dbReference type="GO" id="GO:0006526">
    <property type="term" value="P:L-arginine biosynthetic process"/>
    <property type="evidence" value="ECO:0007669"/>
    <property type="project" value="UniProtKB-UniRule"/>
</dbReference>
<dbReference type="CDD" id="cd24148">
    <property type="entry name" value="AGPR_1_actinobacAGPR_like"/>
    <property type="match status" value="1"/>
</dbReference>
<dbReference type="CDD" id="cd23934">
    <property type="entry name" value="AGPR_1_C"/>
    <property type="match status" value="1"/>
</dbReference>
<dbReference type="FunFam" id="3.30.360.10:FF:000014">
    <property type="entry name" value="N-acetyl-gamma-glutamyl-phosphate reductase"/>
    <property type="match status" value="1"/>
</dbReference>
<dbReference type="Gene3D" id="3.30.360.10">
    <property type="entry name" value="Dihydrodipicolinate Reductase, domain 2"/>
    <property type="match status" value="1"/>
</dbReference>
<dbReference type="Gene3D" id="3.40.50.720">
    <property type="entry name" value="NAD(P)-binding Rossmann-like Domain"/>
    <property type="match status" value="1"/>
</dbReference>
<dbReference type="HAMAP" id="MF_00150">
    <property type="entry name" value="ArgC_type1"/>
    <property type="match status" value="1"/>
</dbReference>
<dbReference type="InterPro" id="IPR023013">
    <property type="entry name" value="AGPR_AS"/>
</dbReference>
<dbReference type="InterPro" id="IPR000706">
    <property type="entry name" value="AGPR_type-1"/>
</dbReference>
<dbReference type="InterPro" id="IPR036291">
    <property type="entry name" value="NAD(P)-bd_dom_sf"/>
</dbReference>
<dbReference type="InterPro" id="IPR050085">
    <property type="entry name" value="NAGSA_dehydrogenase"/>
</dbReference>
<dbReference type="InterPro" id="IPR000534">
    <property type="entry name" value="Semialdehyde_DH_NAD-bd"/>
</dbReference>
<dbReference type="NCBIfam" id="TIGR01850">
    <property type="entry name" value="argC"/>
    <property type="match status" value="1"/>
</dbReference>
<dbReference type="PANTHER" id="PTHR32338:SF10">
    <property type="entry name" value="N-ACETYL-GAMMA-GLUTAMYL-PHOSPHATE REDUCTASE, CHLOROPLASTIC-RELATED"/>
    <property type="match status" value="1"/>
</dbReference>
<dbReference type="PANTHER" id="PTHR32338">
    <property type="entry name" value="N-ACETYL-GAMMA-GLUTAMYL-PHOSPHATE REDUCTASE, CHLOROPLASTIC-RELATED-RELATED"/>
    <property type="match status" value="1"/>
</dbReference>
<dbReference type="Pfam" id="PF01118">
    <property type="entry name" value="Semialdhyde_dh"/>
    <property type="match status" value="1"/>
</dbReference>
<dbReference type="Pfam" id="PF22698">
    <property type="entry name" value="Semialdhyde_dhC_1"/>
    <property type="match status" value="1"/>
</dbReference>
<dbReference type="SMART" id="SM00859">
    <property type="entry name" value="Semialdhyde_dh"/>
    <property type="match status" value="1"/>
</dbReference>
<dbReference type="SUPFAM" id="SSF55347">
    <property type="entry name" value="Glyceraldehyde-3-phosphate dehydrogenase-like, C-terminal domain"/>
    <property type="match status" value="1"/>
</dbReference>
<dbReference type="SUPFAM" id="SSF51735">
    <property type="entry name" value="NAD(P)-binding Rossmann-fold domains"/>
    <property type="match status" value="1"/>
</dbReference>
<dbReference type="PROSITE" id="PS01224">
    <property type="entry name" value="ARGC"/>
    <property type="match status" value="1"/>
</dbReference>
<keyword id="KW-0028">Amino-acid biosynthesis</keyword>
<keyword id="KW-0055">Arginine biosynthesis</keyword>
<keyword id="KW-0963">Cytoplasm</keyword>
<keyword id="KW-0521">NADP</keyword>
<keyword id="KW-0560">Oxidoreductase</keyword>
<sequence>MSYAIRVAVVGASGYAGGEILRLLLGHPAYADDRLTIGTLTAAASSGDTLGEHHPHLTPLAHRVLESTELTVLAGHDVVFLGLPHGHSAALAERLGPETLIIDCGADFRLTDAGAWGRFYESPYAGSWPYGLPELPGGRERLQKARRIAVPGCYPTAILLALLPAMAEGLIEPAVTVFAVSGISGAGRAAKTKLLGSEVIGSARAYNIGGTHRHTAEIIQGLRVVTDRAVTVSFTPVLIPTSRGILAACTARTSSSLSKLRTAYEKAYQVEPFVYLMPEGQLPFTGAVIGSNAAHIAVAVDEAAETFIAISAIDNLVKGTAGAAVQSMNLALGWPEAEGLSVVGVAP</sequence>
<accession>B8ZRK2</accession>
<comment type="function">
    <text evidence="1">Catalyzes the NADPH-dependent reduction of N-acetyl-5-glutamyl phosphate to yield N-acetyl-L-glutamate 5-semialdehyde.</text>
</comment>
<comment type="catalytic activity">
    <reaction evidence="1">
        <text>N-acetyl-L-glutamate 5-semialdehyde + phosphate + NADP(+) = N-acetyl-L-glutamyl 5-phosphate + NADPH + H(+)</text>
        <dbReference type="Rhea" id="RHEA:21588"/>
        <dbReference type="ChEBI" id="CHEBI:15378"/>
        <dbReference type="ChEBI" id="CHEBI:29123"/>
        <dbReference type="ChEBI" id="CHEBI:43474"/>
        <dbReference type="ChEBI" id="CHEBI:57783"/>
        <dbReference type="ChEBI" id="CHEBI:57936"/>
        <dbReference type="ChEBI" id="CHEBI:58349"/>
        <dbReference type="EC" id="1.2.1.38"/>
    </reaction>
</comment>
<comment type="pathway">
    <text evidence="1">Amino-acid biosynthesis; L-arginine biosynthesis; N(2)-acetyl-L-ornithine from L-glutamate: step 3/4.</text>
</comment>
<comment type="subcellular location">
    <subcellularLocation>
        <location evidence="1">Cytoplasm</location>
    </subcellularLocation>
</comment>
<comment type="similarity">
    <text evidence="1">Belongs to the NAGSA dehydrogenase family. Type 1 subfamily.</text>
</comment>
<organism>
    <name type="scientific">Mycobacterium leprae (strain Br4923)</name>
    <dbReference type="NCBI Taxonomy" id="561304"/>
    <lineage>
        <taxon>Bacteria</taxon>
        <taxon>Bacillati</taxon>
        <taxon>Actinomycetota</taxon>
        <taxon>Actinomycetes</taxon>
        <taxon>Mycobacteriales</taxon>
        <taxon>Mycobacteriaceae</taxon>
        <taxon>Mycobacterium</taxon>
    </lineage>
</organism>
<gene>
    <name evidence="1" type="primary">argC</name>
    <name type="ordered locus">MLBr01406</name>
</gene>
<name>ARGC_MYCLB</name>